<feature type="chain" id="PRO_0000202733" description="Putative uncharacterized protein YGL152C">
    <location>
        <begin position="1"/>
        <end position="225"/>
    </location>
</feature>
<feature type="transmembrane region" description="Helical" evidence="1">
    <location>
        <begin position="40"/>
        <end position="60"/>
    </location>
</feature>
<feature type="transmembrane region" description="Helical" evidence="1">
    <location>
        <begin position="63"/>
        <end position="83"/>
    </location>
</feature>
<feature type="transmembrane region" description="Helical" evidence="1">
    <location>
        <begin position="151"/>
        <end position="171"/>
    </location>
</feature>
<feature type="transmembrane region" description="Helical" evidence="1">
    <location>
        <begin position="176"/>
        <end position="196"/>
    </location>
</feature>
<gene>
    <name type="ordered locus">YGL152C</name>
    <name type="ORF">G1873</name>
</gene>
<evidence type="ECO:0000255" key="1"/>
<evidence type="ECO:0000305" key="2"/>
<evidence type="ECO:0000305" key="3">
    <source>
    </source>
</evidence>
<protein>
    <recommendedName>
        <fullName>Putative uncharacterized protein YGL152C</fullName>
    </recommendedName>
</protein>
<accession>P53113</accession>
<organism>
    <name type="scientific">Saccharomyces cerevisiae (strain ATCC 204508 / S288c)</name>
    <name type="common">Baker's yeast</name>
    <dbReference type="NCBI Taxonomy" id="559292"/>
    <lineage>
        <taxon>Eukaryota</taxon>
        <taxon>Fungi</taxon>
        <taxon>Dikarya</taxon>
        <taxon>Ascomycota</taxon>
        <taxon>Saccharomycotina</taxon>
        <taxon>Saccharomycetes</taxon>
        <taxon>Saccharomycetales</taxon>
        <taxon>Saccharomycetaceae</taxon>
        <taxon>Saccharomyces</taxon>
    </lineage>
</organism>
<reference key="1">
    <citation type="journal article" date="1995" name="Yeast">
        <title>DNA sequence analysis of a 35 kb segment from Saccharomyces cerevisiae chromosome VII reveals 19 open reading frames including RAD54, ACE1/CUP2, PMR1, RCK1, AMS1 and CAL1/CDC43.</title>
        <authorList>
            <person name="James C.M."/>
            <person name="Indge K.J."/>
            <person name="Oliver S.G."/>
        </authorList>
    </citation>
    <scope>NUCLEOTIDE SEQUENCE [GENOMIC DNA]</scope>
</reference>
<reference key="2">
    <citation type="journal article" date="1997" name="Nature">
        <title>The nucleotide sequence of Saccharomyces cerevisiae chromosome VII.</title>
        <authorList>
            <person name="Tettelin H."/>
            <person name="Agostoni-Carbone M.L."/>
            <person name="Albermann K."/>
            <person name="Albers M."/>
            <person name="Arroyo J."/>
            <person name="Backes U."/>
            <person name="Barreiros T."/>
            <person name="Bertani I."/>
            <person name="Bjourson A.J."/>
            <person name="Brueckner M."/>
            <person name="Bruschi C.V."/>
            <person name="Carignani G."/>
            <person name="Castagnoli L."/>
            <person name="Cerdan E."/>
            <person name="Clemente M.L."/>
            <person name="Coblenz A."/>
            <person name="Coglievina M."/>
            <person name="Coissac E."/>
            <person name="Defoor E."/>
            <person name="Del Bino S."/>
            <person name="Delius H."/>
            <person name="Delneri D."/>
            <person name="de Wergifosse P."/>
            <person name="Dujon B."/>
            <person name="Durand P."/>
            <person name="Entian K.-D."/>
            <person name="Eraso P."/>
            <person name="Escribano V."/>
            <person name="Fabiani L."/>
            <person name="Fartmann B."/>
            <person name="Feroli F."/>
            <person name="Feuermann M."/>
            <person name="Frontali L."/>
            <person name="Garcia-Gonzalez M."/>
            <person name="Garcia-Saez M.I."/>
            <person name="Goffeau A."/>
            <person name="Guerreiro P."/>
            <person name="Hani J."/>
            <person name="Hansen M."/>
            <person name="Hebling U."/>
            <person name="Hernandez K."/>
            <person name="Heumann K."/>
            <person name="Hilger F."/>
            <person name="Hofmann B."/>
            <person name="Indge K.J."/>
            <person name="James C.M."/>
            <person name="Klima R."/>
            <person name="Koetter P."/>
            <person name="Kramer B."/>
            <person name="Kramer W."/>
            <person name="Lauquin G."/>
            <person name="Leuther H."/>
            <person name="Louis E.J."/>
            <person name="Maillier E."/>
            <person name="Marconi A."/>
            <person name="Martegani E."/>
            <person name="Mazon M.J."/>
            <person name="Mazzoni C."/>
            <person name="McReynolds A.D.K."/>
            <person name="Melchioretto P."/>
            <person name="Mewes H.-W."/>
            <person name="Minenkova O."/>
            <person name="Mueller-Auer S."/>
            <person name="Nawrocki A."/>
            <person name="Netter P."/>
            <person name="Neu R."/>
            <person name="Nombela C."/>
            <person name="Oliver S.G."/>
            <person name="Panzeri L."/>
            <person name="Paoluzi S."/>
            <person name="Plevani P."/>
            <person name="Portetelle D."/>
            <person name="Portillo F."/>
            <person name="Potier S."/>
            <person name="Purnelle B."/>
            <person name="Rieger M."/>
            <person name="Riles L."/>
            <person name="Rinaldi T."/>
            <person name="Robben J."/>
            <person name="Rodrigues-Pousada C."/>
            <person name="Rodriguez-Belmonte E."/>
            <person name="Rodriguez-Torres A.M."/>
            <person name="Rose M."/>
            <person name="Ruzzi M."/>
            <person name="Saliola M."/>
            <person name="Sanchez-Perez M."/>
            <person name="Schaefer B."/>
            <person name="Schaefer M."/>
            <person name="Scharfe M."/>
            <person name="Schmidheini T."/>
            <person name="Schreer A."/>
            <person name="Skala J."/>
            <person name="Souciet J.-L."/>
            <person name="Steensma H.Y."/>
            <person name="Talla E."/>
            <person name="Thierry A."/>
            <person name="Vandenbol M."/>
            <person name="van der Aart Q.J.M."/>
            <person name="Van Dyck L."/>
            <person name="Vanoni M."/>
            <person name="Verhasselt P."/>
            <person name="Voet M."/>
            <person name="Volckaert G."/>
            <person name="Wambutt R."/>
            <person name="Watson M.D."/>
            <person name="Weber N."/>
            <person name="Wedler E."/>
            <person name="Wedler H."/>
            <person name="Wipfli P."/>
            <person name="Wolf K."/>
            <person name="Wright L.F."/>
            <person name="Zaccaria P."/>
            <person name="Zimmermann M."/>
            <person name="Zollner A."/>
            <person name="Kleine K."/>
        </authorList>
    </citation>
    <scope>NUCLEOTIDE SEQUENCE [LARGE SCALE GENOMIC DNA]</scope>
    <source>
        <strain>ATCC 204508 / S288c</strain>
    </source>
</reference>
<reference key="3">
    <citation type="journal article" date="2014" name="G3 (Bethesda)">
        <title>The reference genome sequence of Saccharomyces cerevisiae: Then and now.</title>
        <authorList>
            <person name="Engel S.R."/>
            <person name="Dietrich F.S."/>
            <person name="Fisk D.G."/>
            <person name="Binkley G."/>
            <person name="Balakrishnan R."/>
            <person name="Costanzo M.C."/>
            <person name="Dwight S.S."/>
            <person name="Hitz B.C."/>
            <person name="Karra K."/>
            <person name="Nash R.S."/>
            <person name="Weng S."/>
            <person name="Wong E.D."/>
            <person name="Lloyd P."/>
            <person name="Skrzypek M.S."/>
            <person name="Miyasato S.R."/>
            <person name="Simison M."/>
            <person name="Cherry J.M."/>
        </authorList>
    </citation>
    <scope>GENOME REANNOTATION</scope>
    <source>
        <strain>ATCC 204508 / S288c</strain>
    </source>
</reference>
<dbReference type="EMBL" id="Z48618">
    <property type="status" value="NOT_ANNOTATED_CDS"/>
    <property type="molecule type" value="Genomic_DNA"/>
</dbReference>
<dbReference type="EMBL" id="Z72675">
    <property type="protein sequence ID" value="CAA96865.1"/>
    <property type="molecule type" value="Genomic_DNA"/>
</dbReference>
<dbReference type="PIR" id="S60432">
    <property type="entry name" value="S60432"/>
</dbReference>
<dbReference type="IntAct" id="P53113">
    <property type="interactions" value="1"/>
</dbReference>
<dbReference type="STRING" id="4932.YGL152C"/>
<dbReference type="PaxDb" id="4932-YGL152C"/>
<dbReference type="EnsemblFungi" id="YGL152C_mRNA">
    <property type="protein sequence ID" value="YGL152C"/>
    <property type="gene ID" value="YGL152C"/>
</dbReference>
<dbReference type="AGR" id="SGD:S000003120"/>
<dbReference type="SGD" id="S000003120">
    <property type="gene designation" value="YGL152C"/>
</dbReference>
<dbReference type="HOGENOM" id="CLU_1230756_0_0_1"/>
<dbReference type="GO" id="GO:0016020">
    <property type="term" value="C:membrane"/>
    <property type="evidence" value="ECO:0007669"/>
    <property type="project" value="UniProtKB-SubCell"/>
</dbReference>
<proteinExistence type="uncertain"/>
<comment type="subcellular location">
    <subcellularLocation>
        <location evidence="2">Membrane</location>
        <topology evidence="2">Multi-pass membrane protein</topology>
    </subcellularLocation>
</comment>
<comment type="miscellaneous">
    <text evidence="2">Partially overlaps PEX14.</text>
</comment>
<comment type="caution">
    <text evidence="3">Product of a dubious gene prediction unlikely to encode a functional protein. Because of that it is not part of the S.cerevisiae S288c complete/reference proteome set.</text>
</comment>
<name>YGP2_YEAST</name>
<keyword id="KW-0472">Membrane</keyword>
<keyword id="KW-0812">Transmembrane</keyword>
<keyword id="KW-1133">Transmembrane helix</keyword>
<sequence>MSIVSRTVTITISVKKLITYIELRYGMESSTCPFCQSGTLISLAAVFFCHSGMEALLSIVCSLAFFHAGTALSSLLASLPFSFSLSLSSCMPILARISDADGIVSMPGIPLGDMENNLLSCALPDSIRLFIKLFRDSISFWILFNSCMPSLSETNLSIVFCILTTSSLTILNSSSIFSLLLVVCTSACFSSAIVSLSSFNVSLSFFLNSACSASMALRTVSILEN</sequence>